<evidence type="ECO:0000250" key="1">
    <source>
        <dbReference type="UniProtKB" id="O43314"/>
    </source>
</evidence>
<evidence type="ECO:0000250" key="2">
    <source>
        <dbReference type="UniProtKB" id="O74429"/>
    </source>
</evidence>
<evidence type="ECO:0000250" key="3">
    <source>
        <dbReference type="UniProtKB" id="Q6PFW1"/>
    </source>
</evidence>
<evidence type="ECO:0000256" key="4">
    <source>
        <dbReference type="SAM" id="MobiDB-lite"/>
    </source>
</evidence>
<evidence type="ECO:0000269" key="5">
    <source>
    </source>
</evidence>
<evidence type="ECO:0000269" key="6">
    <source>
    </source>
</evidence>
<evidence type="ECO:0000269" key="7">
    <source>
    </source>
</evidence>
<evidence type="ECO:0000269" key="8">
    <source>
    </source>
</evidence>
<evidence type="ECO:0000269" key="9">
    <source>
    </source>
</evidence>
<evidence type="ECO:0000305" key="10"/>
<evidence type="ECO:0000305" key="11">
    <source>
    </source>
</evidence>
<evidence type="ECO:0000312" key="12">
    <source>
        <dbReference type="SGD" id="S000004402"/>
    </source>
</evidence>
<evidence type="ECO:0007744" key="13">
    <source>
    </source>
</evidence>
<evidence type="ECO:0007744" key="14">
    <source>
    </source>
</evidence>
<evidence type="ECO:0007744" key="15">
    <source>
    </source>
</evidence>
<keyword id="KW-0002">3D-structure</keyword>
<keyword id="KW-0067">ATP-binding</keyword>
<keyword id="KW-0963">Cytoplasm</keyword>
<keyword id="KW-0206">Cytoskeleton</keyword>
<keyword id="KW-0418">Kinase</keyword>
<keyword id="KW-0547">Nucleotide-binding</keyword>
<keyword id="KW-0597">Phosphoprotein</keyword>
<keyword id="KW-1185">Reference proteome</keyword>
<keyword id="KW-0808">Transferase</keyword>
<comment type="function">
    <text evidence="2 3 5 8 9">Bifunctional inositol kinase that acts in concert with the IP6K kinases to synthesize the diphosphate group-containing inositol pyrophosphates diphosphoinositol pentakisphosphate, PP-InsP5, and bis-diphosphoinositol tetrakisphosphate, (PP)2-InsP4 (PubMed:17412958). Phosphorylates inositol hexakisphosphate (InsP6) at position 1 to produce PP-InsP5 which is in turn phosphorylated by IP6Ks to produce (PP)2-InsP4. Alternatively, phosphorylates PP-InsP5 at position 1, produced by IP6Ks from InsP6, to produce (PP)2-InsP4 (By similarity). Required for maintaining cellular integrity, normal growth and interactions with the ARP complex (PubMed:10388810). Acts as a regulator of the PHO80-PHO85 cyclin/cyclin-dependent kinase (CDK) complex, thereby regulating signaling of phosphate availability (PubMed:17412959). Required for the function of the cortical actin cytoskeleton, possibly by participating in correct F-actin localization and ensuring polarized growth (PubMed:10388810). Regulates polarized growth and modulates interphase microtubule cytoskeleton. Regulates microtubule dynamics without the requirement of microtubule plus-end tracking protein Mal3. Required for growth zone selection (By similarity).</text>
</comment>
<comment type="catalytic activity">
    <reaction evidence="8">
        <text>1D-myo-inositol hexakisphosphate + ATP = 1-diphospho-1D-myo-inositol 2,3,4,5,6-pentakisphosphate + ADP</text>
        <dbReference type="Rhea" id="RHEA:37459"/>
        <dbReference type="ChEBI" id="CHEBI:30616"/>
        <dbReference type="ChEBI" id="CHEBI:58130"/>
        <dbReference type="ChEBI" id="CHEBI:74946"/>
        <dbReference type="ChEBI" id="CHEBI:456216"/>
        <dbReference type="EC" id="2.7.4.24"/>
    </reaction>
    <physiologicalReaction direction="left-to-right" evidence="11">
        <dbReference type="Rhea" id="RHEA:37460"/>
    </physiologicalReaction>
</comment>
<comment type="catalytic activity">
    <reaction evidence="8">
        <text>5-diphospho-1D-myo-inositol 1,2,3,4,6-pentakisphosphate + ATP + H(+) = 1,5-bis(diphospho)-1D-myo-inositol 2,3,4,6-tetrakisphosphate + ADP</text>
        <dbReference type="Rhea" id="RHEA:10276"/>
        <dbReference type="ChEBI" id="CHEBI:15378"/>
        <dbReference type="ChEBI" id="CHEBI:30616"/>
        <dbReference type="ChEBI" id="CHEBI:58628"/>
        <dbReference type="ChEBI" id="CHEBI:77983"/>
        <dbReference type="ChEBI" id="CHEBI:456216"/>
        <dbReference type="EC" id="2.7.4.24"/>
    </reaction>
    <physiologicalReaction direction="left-to-right" evidence="11">
        <dbReference type="Rhea" id="RHEA:10277"/>
    </physiologicalReaction>
</comment>
<comment type="subcellular location">
    <subcellularLocation>
        <location evidence="6">Cytoplasm</location>
    </subcellularLocation>
    <subcellularLocation>
        <location evidence="6">Cytoplasm</location>
        <location evidence="6">Cytoskeleton</location>
    </subcellularLocation>
</comment>
<comment type="domain">
    <text evidence="2">The N-terminal kinase domain produces inositol polyphosphates. The C-terminal acid phosphatase-like domain binds inositol polyphosphates and negatively regulates their accumulation. The C-terminal domain reduces the amount of inositol pyrophosphates in a dose-dependent manner in vitro.</text>
</comment>
<comment type="miscellaneous">
    <text evidence="7">Present with 8810 molecules/cell in log phase SD medium.</text>
</comment>
<comment type="similarity">
    <text evidence="10">Belongs to the histidine acid phosphatase family. VIP1 subfamily.</text>
</comment>
<comment type="caution">
    <text evidence="10">Although related to histidine acid phosphatase proteins, it lacks the conserved active sites, suggesting that it has no phosphatase activity.</text>
</comment>
<organism>
    <name type="scientific">Saccharomyces cerevisiae (strain ATCC 204508 / S288c)</name>
    <name type="common">Baker's yeast</name>
    <dbReference type="NCBI Taxonomy" id="559292"/>
    <lineage>
        <taxon>Eukaryota</taxon>
        <taxon>Fungi</taxon>
        <taxon>Dikarya</taxon>
        <taxon>Ascomycota</taxon>
        <taxon>Saccharomycotina</taxon>
        <taxon>Saccharomycetes</taxon>
        <taxon>Saccharomycetales</taxon>
        <taxon>Saccharomycetaceae</taxon>
        <taxon>Saccharomyces</taxon>
    </lineage>
</organism>
<feature type="chain" id="PRO_0000270924" description="Inositol hexakisphosphate and diphosphoinositol-pentakisphosphate kinase">
    <location>
        <begin position="1"/>
        <end position="1146"/>
    </location>
</feature>
<feature type="region of interest" description="Disordered" evidence="4">
    <location>
        <begin position="1"/>
        <end position="33"/>
    </location>
</feature>
<feature type="region of interest" description="Disordered" evidence="4">
    <location>
        <begin position="93"/>
        <end position="185"/>
    </location>
</feature>
<feature type="region of interest" description="Polyphosphoinositide-binding domain" evidence="3">
    <location>
        <begin position="530"/>
        <end position="597"/>
    </location>
</feature>
<feature type="region of interest" description="Disordered" evidence="4">
    <location>
        <begin position="1106"/>
        <end position="1146"/>
    </location>
</feature>
<feature type="compositionally biased region" description="Polar residues" evidence="4">
    <location>
        <begin position="16"/>
        <end position="25"/>
    </location>
</feature>
<feature type="compositionally biased region" description="Low complexity" evidence="4">
    <location>
        <begin position="96"/>
        <end position="106"/>
    </location>
</feature>
<feature type="compositionally biased region" description="Basic and acidic residues" evidence="4">
    <location>
        <begin position="110"/>
        <end position="120"/>
    </location>
</feature>
<feature type="compositionally biased region" description="Polar residues" evidence="4">
    <location>
        <begin position="125"/>
        <end position="144"/>
    </location>
</feature>
<feature type="compositionally biased region" description="Low complexity" evidence="4">
    <location>
        <begin position="164"/>
        <end position="178"/>
    </location>
</feature>
<feature type="binding site" evidence="1">
    <location>
        <begin position="197"/>
        <end position="198"/>
    </location>
    <ligand>
        <name>substrate</name>
    </ligand>
</feature>
<feature type="binding site" evidence="1">
    <location>
        <position position="278"/>
    </location>
    <ligand>
        <name>ATP</name>
        <dbReference type="ChEBI" id="CHEBI:30616"/>
    </ligand>
</feature>
<feature type="binding site" evidence="1">
    <location>
        <position position="351"/>
    </location>
    <ligand>
        <name>ATP</name>
        <dbReference type="ChEBI" id="CHEBI:30616"/>
    </ligand>
</feature>
<feature type="binding site" evidence="1">
    <location>
        <position position="358"/>
    </location>
    <ligand>
        <name>ATP</name>
        <dbReference type="ChEBI" id="CHEBI:30616"/>
    </ligand>
</feature>
<feature type="binding site" evidence="1">
    <location>
        <begin position="377"/>
        <end position="378"/>
    </location>
    <ligand>
        <name>substrate</name>
    </ligand>
</feature>
<feature type="binding site" evidence="1">
    <location>
        <position position="377"/>
    </location>
    <ligand>
        <name>ATP</name>
        <dbReference type="ChEBI" id="CHEBI:30616"/>
    </ligand>
</feature>
<feature type="binding site" evidence="1">
    <location>
        <begin position="402"/>
        <end position="405"/>
    </location>
    <ligand>
        <name>ATP</name>
        <dbReference type="ChEBI" id="CHEBI:30616"/>
    </ligand>
</feature>
<feature type="binding site" evidence="1">
    <location>
        <begin position="412"/>
        <end position="414"/>
    </location>
    <ligand>
        <name>ATP</name>
        <dbReference type="ChEBI" id="CHEBI:30616"/>
    </ligand>
</feature>
<feature type="binding site" evidence="1">
    <location>
        <position position="414"/>
    </location>
    <ligand>
        <name>substrate</name>
    </ligand>
</feature>
<feature type="binding site" evidence="1">
    <location>
        <position position="428"/>
    </location>
    <ligand>
        <name>substrate</name>
    </ligand>
</feature>
<feature type="binding site" evidence="1">
    <location>
        <position position="430"/>
    </location>
    <ligand>
        <name>ATP</name>
        <dbReference type="ChEBI" id="CHEBI:30616"/>
    </ligand>
</feature>
<feature type="binding site" evidence="1">
    <location>
        <position position="475"/>
    </location>
    <ligand>
        <name>ATP</name>
        <dbReference type="ChEBI" id="CHEBI:30616"/>
    </ligand>
</feature>
<feature type="binding site" evidence="1">
    <location>
        <begin position="487"/>
        <end position="489"/>
    </location>
    <ligand>
        <name>ATP</name>
        <dbReference type="ChEBI" id="CHEBI:30616"/>
    </ligand>
</feature>
<feature type="binding site" evidence="1">
    <location>
        <begin position="492"/>
        <end position="495"/>
    </location>
    <ligand>
        <name>substrate</name>
    </ligand>
</feature>
<feature type="modified residue" description="Phosphoserine" evidence="14 15">
    <location>
        <position position="31"/>
    </location>
</feature>
<feature type="modified residue" description="Phosphoserine" evidence="13">
    <location>
        <position position="54"/>
    </location>
</feature>
<feature type="modified residue" description="Phosphoserine" evidence="14">
    <location>
        <position position="77"/>
    </location>
</feature>
<feature type="modified residue" description="Phosphoserine" evidence="15">
    <location>
        <position position="895"/>
    </location>
</feature>
<feature type="modified residue" description="Phosphoserine" evidence="15">
    <location>
        <position position="1107"/>
    </location>
</feature>
<feature type="mutagenesis site" description="Abolishes enzyme activity." evidence="8">
    <original>D</original>
    <variation>A</variation>
    <location>
        <position position="487"/>
    </location>
</feature>
<feature type="mutagenesis site" description="Does not affect enzyme activity." evidence="8">
    <original>H</original>
    <variation>A</variation>
    <location>
        <position position="548"/>
    </location>
</feature>
<proteinExistence type="evidence at protein level"/>
<protein>
    <recommendedName>
        <fullName evidence="10">Inositol hexakisphosphate and diphosphoinositol-pentakisphosphate kinase</fullName>
        <ecNumber evidence="8">2.7.4.24</ecNumber>
    </recommendedName>
    <alternativeName>
        <fullName>InsP6 and PP-IP5 kinase</fullName>
    </alternativeName>
</protein>
<reference key="1">
    <citation type="journal article" date="1997" name="Nature">
        <title>The nucleotide sequence of Saccharomyces cerevisiae chromosome XII.</title>
        <authorList>
            <person name="Johnston M."/>
            <person name="Hillier L.W."/>
            <person name="Riles L."/>
            <person name="Albermann K."/>
            <person name="Andre B."/>
            <person name="Ansorge W."/>
            <person name="Benes V."/>
            <person name="Brueckner M."/>
            <person name="Delius H."/>
            <person name="Dubois E."/>
            <person name="Duesterhoeft A."/>
            <person name="Entian K.-D."/>
            <person name="Floeth M."/>
            <person name="Goffeau A."/>
            <person name="Hebling U."/>
            <person name="Heumann K."/>
            <person name="Heuss-Neitzel D."/>
            <person name="Hilbert H."/>
            <person name="Hilger F."/>
            <person name="Kleine K."/>
            <person name="Koetter P."/>
            <person name="Louis E.J."/>
            <person name="Messenguy F."/>
            <person name="Mewes H.-W."/>
            <person name="Miosga T."/>
            <person name="Moestl D."/>
            <person name="Mueller-Auer S."/>
            <person name="Nentwich U."/>
            <person name="Obermaier B."/>
            <person name="Piravandi E."/>
            <person name="Pohl T.M."/>
            <person name="Portetelle D."/>
            <person name="Purnelle B."/>
            <person name="Rechmann S."/>
            <person name="Rieger M."/>
            <person name="Rinke M."/>
            <person name="Rose M."/>
            <person name="Scharfe M."/>
            <person name="Scherens B."/>
            <person name="Scholler P."/>
            <person name="Schwager C."/>
            <person name="Schwarz S."/>
            <person name="Underwood A.P."/>
            <person name="Urrestarazu L.A."/>
            <person name="Vandenbol M."/>
            <person name="Verhasselt P."/>
            <person name="Vierendeels F."/>
            <person name="Voet M."/>
            <person name="Volckaert G."/>
            <person name="Voss H."/>
            <person name="Wambutt R."/>
            <person name="Wedler E."/>
            <person name="Wedler H."/>
            <person name="Zimmermann F.K."/>
            <person name="Zollner A."/>
            <person name="Hani J."/>
            <person name="Hoheisel J.D."/>
        </authorList>
    </citation>
    <scope>NUCLEOTIDE SEQUENCE [LARGE SCALE GENOMIC DNA]</scope>
    <source>
        <strain>ATCC 204508 / S288c</strain>
    </source>
</reference>
<reference key="2">
    <citation type="journal article" date="2014" name="G3 (Bethesda)">
        <title>The reference genome sequence of Saccharomyces cerevisiae: Then and now.</title>
        <authorList>
            <person name="Engel S.R."/>
            <person name="Dietrich F.S."/>
            <person name="Fisk D.G."/>
            <person name="Binkley G."/>
            <person name="Balakrishnan R."/>
            <person name="Costanzo M.C."/>
            <person name="Dwight S.S."/>
            <person name="Hitz B.C."/>
            <person name="Karra K."/>
            <person name="Nash R.S."/>
            <person name="Weng S."/>
            <person name="Wong E.D."/>
            <person name="Lloyd P."/>
            <person name="Skrzypek M.S."/>
            <person name="Miyasato S.R."/>
            <person name="Simison M."/>
            <person name="Cherry J.M."/>
        </authorList>
    </citation>
    <scope>GENOME REANNOTATION</scope>
    <source>
        <strain>ATCC 204508 / S288c</strain>
    </source>
</reference>
<reference key="3">
    <citation type="journal article" date="1999" name="Genetics">
        <title>Identification and characterization of Schizosaccharomyces pombe asp1(+), a gene that interacts with mutations in the Arp2/3 complex and actin.</title>
        <authorList>
            <person name="Feoktistova A."/>
            <person name="McCollum D."/>
            <person name="Ohi R."/>
            <person name="Gould K.L."/>
        </authorList>
    </citation>
    <scope>FUNCTION</scope>
</reference>
<reference key="4">
    <citation type="journal article" date="2003" name="Nature">
        <title>Global analysis of protein localization in budding yeast.</title>
        <authorList>
            <person name="Huh W.-K."/>
            <person name="Falvo J.V."/>
            <person name="Gerke L.C."/>
            <person name="Carroll A.S."/>
            <person name="Howson R.W."/>
            <person name="Weissman J.S."/>
            <person name="O'Shea E.K."/>
        </authorList>
    </citation>
    <scope>SUBCELLULAR LOCATION [LARGE SCALE ANALYSIS]</scope>
</reference>
<reference key="5">
    <citation type="journal article" date="2003" name="Nature">
        <title>Global analysis of protein expression in yeast.</title>
        <authorList>
            <person name="Ghaemmaghami S."/>
            <person name="Huh W.-K."/>
            <person name="Bower K."/>
            <person name="Howson R.W."/>
            <person name="Belle A."/>
            <person name="Dephoure N."/>
            <person name="O'Shea E.K."/>
            <person name="Weissman J.S."/>
        </authorList>
    </citation>
    <scope>LEVEL OF PROTEIN EXPRESSION [LARGE SCALE ANALYSIS]</scope>
</reference>
<reference key="6">
    <citation type="journal article" date="2005" name="Mol. Cell. Proteomics">
        <title>Quantitative phosphoproteomics applied to the yeast pheromone signaling pathway.</title>
        <authorList>
            <person name="Gruhler A."/>
            <person name="Olsen J.V."/>
            <person name="Mohammed S."/>
            <person name="Mortensen P."/>
            <person name="Faergeman N.J."/>
            <person name="Mann M."/>
            <person name="Jensen O.N."/>
        </authorList>
    </citation>
    <scope>IDENTIFICATION BY MASS SPECTROMETRY [LARGE SCALE ANALYSIS]</scope>
    <source>
        <strain>YAL6B</strain>
    </source>
</reference>
<reference key="7">
    <citation type="journal article" date="2007" name="J. Proteome Res.">
        <title>Large-scale phosphorylation analysis of alpha-factor-arrested Saccharomyces cerevisiae.</title>
        <authorList>
            <person name="Li X."/>
            <person name="Gerber S.A."/>
            <person name="Rudner A.D."/>
            <person name="Beausoleil S.A."/>
            <person name="Haas W."/>
            <person name="Villen J."/>
            <person name="Elias J.E."/>
            <person name="Gygi S.P."/>
        </authorList>
    </citation>
    <scope>PHOSPHORYLATION [LARGE SCALE ANALYSIS] AT SER-54</scope>
    <scope>IDENTIFICATION BY MASS SPECTROMETRY [LARGE SCALE ANALYSIS]</scope>
    <source>
        <strain>ADR376</strain>
    </source>
</reference>
<reference key="8">
    <citation type="journal article" date="2007" name="Science">
        <title>A conserved family of enzymes that phosphorylate inositol hexakisphosphate.</title>
        <authorList>
            <person name="Mulugu S."/>
            <person name="Bai W."/>
            <person name="Fridy P.C."/>
            <person name="Bastidas R.J."/>
            <person name="Otto J.C."/>
            <person name="Dollins D.E."/>
            <person name="Haystead T.A."/>
            <person name="Ribeiro A.A."/>
            <person name="York J.D."/>
        </authorList>
    </citation>
    <scope>FUNCTION</scope>
    <scope>CATALYTIC ACTIVITY</scope>
    <scope>MUTAGENESIS OF ASP-487 AND HIS-548</scope>
</reference>
<reference key="9">
    <citation type="journal article" date="2007" name="Science">
        <title>Regulation of a cyclin-CDK-CDK inhibitor complex by inositol pyrophosphates.</title>
        <authorList>
            <person name="Lee Y.-S."/>
            <person name="Mulugu S."/>
            <person name="York J.D."/>
            <person name="O'Shea E.K."/>
        </authorList>
    </citation>
    <scope>FUNCTION</scope>
</reference>
<reference key="10">
    <citation type="journal article" date="2008" name="Mol. Cell. Proteomics">
        <title>A multidimensional chromatography technology for in-depth phosphoproteome analysis.</title>
        <authorList>
            <person name="Albuquerque C.P."/>
            <person name="Smolka M.B."/>
            <person name="Payne S.H."/>
            <person name="Bafna V."/>
            <person name="Eng J."/>
            <person name="Zhou H."/>
        </authorList>
    </citation>
    <scope>PHOSPHORYLATION [LARGE SCALE ANALYSIS] AT SER-31 AND SER-77</scope>
    <scope>IDENTIFICATION BY MASS SPECTROMETRY [LARGE SCALE ANALYSIS]</scope>
</reference>
<reference key="11">
    <citation type="journal article" date="2009" name="Science">
        <title>Global analysis of Cdk1 substrate phosphorylation sites provides insights into evolution.</title>
        <authorList>
            <person name="Holt L.J."/>
            <person name="Tuch B.B."/>
            <person name="Villen J."/>
            <person name="Johnson A.D."/>
            <person name="Gygi S.P."/>
            <person name="Morgan D.O."/>
        </authorList>
    </citation>
    <scope>PHOSPHORYLATION [LARGE SCALE ANALYSIS] AT SER-31; SER-895 AND SER-1107</scope>
    <scope>IDENTIFICATION BY MASS SPECTROMETRY [LARGE SCALE ANALYSIS]</scope>
</reference>
<name>VIP1_YEAST</name>
<accession>Q06685</accession>
<accession>D6VZ44</accession>
<gene>
    <name evidence="12" type="primary">VIP1</name>
    <name type="ordered locus">YLR410W</name>
</gene>
<sequence length="1146" mass="129755">MSGIKKEPIESDEVPQQETKNNLPSAPSEMSPLFLNKNTQKAMQSIAPILEGFSPKTSASENMSLKLPPPGIQDDHSEENLTVHDTLQRTISTALGNGNNTNTVTTSGLKKADSESKSEADPEGLSNSNIVNDADNINSISKTGSPHLPQGTMDAEQTNMGTNSVPTSSASSRKSSTSHPKPRLPKVGKIGVCAMDAKVLSKPMRHILNRLIEHGEFETVIFGDKVILDERIENWPTCDFLISFFSSGFPLDKAIKYVKLRKPFIINDLIMQKILWDRRLCLQVLEAYNVPTPPRLEISRDGGPRANEELRAKLREHGVEVKPVEEPEWKMVDDDTLEVDGKTMTKPFVEKPVDGEDHNIYIYYHSKNGGGGRRLFRKVGNKSSEFDPTLVHPRTEGSYIYEQFMDTDNFEDVKAYTIGENFCHAETRKSPVVDGIVRRNTHGKEVRYITELSDEEKTIAGKVSKAFSQMICGFDLLRVSGKSYVIDVNGFSFVKDNKAYYDSCANILRSTFIEAKKKMDMEKKNLPIIREEKEQKWVFKGLAIIIRHADRTPKQKFKHSFTSPIFISLLKGHKEEVVIRNVNDLKIVLQALRIALDEKAGNPAKIKVLANALEKKLNFPGTKIQLKPVLNKENEVEKVQFILKWGGEPTHSAKYQATELGEQMRQDFDLLNKSILQNIKIFSSSERRVLHTAQYWTRALFGADELGSDEISIRKDLLDDSNAAKDLMDKVKKKLKPLLREGKEAPPQFAWPSKMPEPYLVIKRVVELMNYHKKIMDNNFAKKDVNSMQTRWCTSEDPSLFKERWDKLFKEFNNAEKVDPSKISELYDTMKYDALHNRQFLENIFDPGLPNEAIADELGSHSLVDRYPINVLAKNNFKIIDSHSMNNSGKNSSNSVGSLGWVLESGKTSTARNPKSSSQFDEPRFMQLRELYKLAKVLFDFICPKEYGISDAEKLDIGLLTSLPLAKQILNDIGDMKNRETPACVAYFTKESHIYTLLNIIYESGIPMRIARNALPELDYLSQITFELYESTDASGQKSHSIRLKMSPGCHTQDPLDVQLDDRHYISCIPKISLTKHLDMDYVQQKLRNKFTRVIMPPKFTPVNITSPNLSFQKRKTRRKSVSVEKLKRPASSGSSSSTSVNKTLD</sequence>
<dbReference type="EC" id="2.7.4.24" evidence="8"/>
<dbReference type="EMBL" id="U20162">
    <property type="protein sequence ID" value="AAB67497.1"/>
    <property type="molecule type" value="Genomic_DNA"/>
</dbReference>
<dbReference type="EMBL" id="BK006945">
    <property type="protein sequence ID" value="DAA09710.1"/>
    <property type="molecule type" value="Genomic_DNA"/>
</dbReference>
<dbReference type="PIR" id="S59376">
    <property type="entry name" value="S59376"/>
</dbReference>
<dbReference type="RefSeq" id="NP_013514.1">
    <property type="nucleotide sequence ID" value="NM_001182298.1"/>
</dbReference>
<dbReference type="PDB" id="9GR8">
    <property type="method" value="X-ray"/>
    <property type="resolution" value="1.18 A"/>
    <property type="chains" value="A=186-520"/>
</dbReference>
<dbReference type="PDB" id="9GRH">
    <property type="method" value="X-ray"/>
    <property type="resolution" value="3.20 A"/>
    <property type="chains" value="A/B/C/D=536-1107"/>
</dbReference>
<dbReference type="PDB" id="9GRN">
    <property type="method" value="X-ray"/>
    <property type="resolution" value="3.40 A"/>
    <property type="chains" value="A/B/C/D=536-847, A/B/C/D=919-1107"/>
</dbReference>
<dbReference type="PDB" id="9GRO">
    <property type="method" value="X-ray"/>
    <property type="resolution" value="2.36 A"/>
    <property type="chains" value="A/B=536-1107"/>
</dbReference>
<dbReference type="PDBsum" id="9GR8"/>
<dbReference type="PDBsum" id="9GRH"/>
<dbReference type="PDBsum" id="9GRN"/>
<dbReference type="PDBsum" id="9GRO"/>
<dbReference type="SMR" id="Q06685"/>
<dbReference type="BioGRID" id="31667">
    <property type="interactions" value="562"/>
</dbReference>
<dbReference type="FunCoup" id="Q06685">
    <property type="interactions" value="652"/>
</dbReference>
<dbReference type="IntAct" id="Q06685">
    <property type="interactions" value="32"/>
</dbReference>
<dbReference type="MINT" id="Q06685"/>
<dbReference type="STRING" id="4932.YLR410W"/>
<dbReference type="GlyGen" id="Q06685">
    <property type="glycosylation" value="1 site, 1 O-linked glycan (1 site)"/>
</dbReference>
<dbReference type="iPTMnet" id="Q06685"/>
<dbReference type="PaxDb" id="4932-YLR410W"/>
<dbReference type="PeptideAtlas" id="Q06685"/>
<dbReference type="EnsemblFungi" id="YLR410W_mRNA">
    <property type="protein sequence ID" value="YLR410W"/>
    <property type="gene ID" value="YLR410W"/>
</dbReference>
<dbReference type="GeneID" id="851126"/>
<dbReference type="KEGG" id="sce:YLR410W"/>
<dbReference type="AGR" id="SGD:S000004402"/>
<dbReference type="SGD" id="S000004402">
    <property type="gene designation" value="VIP1"/>
</dbReference>
<dbReference type="VEuPathDB" id="FungiDB:YLR410W"/>
<dbReference type="eggNOG" id="KOG1057">
    <property type="taxonomic scope" value="Eukaryota"/>
</dbReference>
<dbReference type="GeneTree" id="ENSGT00390000009048"/>
<dbReference type="HOGENOM" id="CLU_000914_3_1_1"/>
<dbReference type="InParanoid" id="Q06685"/>
<dbReference type="OMA" id="IQERWCC"/>
<dbReference type="OrthoDB" id="18042at2759"/>
<dbReference type="BioCyc" id="YEAST:MONOMER3O-224"/>
<dbReference type="Reactome" id="R-SCE-1855167">
    <property type="pathway name" value="Synthesis of pyrophosphates in the cytosol"/>
</dbReference>
<dbReference type="BioGRID-ORCS" id="851126">
    <property type="hits" value="0 hits in 10 CRISPR screens"/>
</dbReference>
<dbReference type="PRO" id="PR:Q06685"/>
<dbReference type="Proteomes" id="UP000002311">
    <property type="component" value="Chromosome XII"/>
</dbReference>
<dbReference type="RNAct" id="Q06685">
    <property type="molecule type" value="protein"/>
</dbReference>
<dbReference type="GO" id="GO:0005737">
    <property type="term" value="C:cytoplasm"/>
    <property type="evidence" value="ECO:0007005"/>
    <property type="project" value="SGD"/>
</dbReference>
<dbReference type="GO" id="GO:0005856">
    <property type="term" value="C:cytoskeleton"/>
    <property type="evidence" value="ECO:0007669"/>
    <property type="project" value="UniProtKB-SubCell"/>
</dbReference>
<dbReference type="GO" id="GO:0005829">
    <property type="term" value="C:cytosol"/>
    <property type="evidence" value="ECO:0000318"/>
    <property type="project" value="GO_Central"/>
</dbReference>
<dbReference type="GO" id="GO:0033857">
    <property type="term" value="F:5-diphosphoinositol pentakisphosphate 1-kinase activity"/>
    <property type="evidence" value="ECO:0000318"/>
    <property type="project" value="GO_Central"/>
</dbReference>
<dbReference type="GO" id="GO:0005524">
    <property type="term" value="F:ATP binding"/>
    <property type="evidence" value="ECO:0000250"/>
    <property type="project" value="UniProtKB"/>
</dbReference>
<dbReference type="GO" id="GO:0000829">
    <property type="term" value="F:diphosphoinositol pentakisphosphate kinase activity"/>
    <property type="evidence" value="ECO:0000314"/>
    <property type="project" value="SGD"/>
</dbReference>
<dbReference type="GO" id="GO:0052723">
    <property type="term" value="F:inositol hexakisphosphate 1-kinase activity"/>
    <property type="evidence" value="ECO:0000314"/>
    <property type="project" value="SGD"/>
</dbReference>
<dbReference type="GO" id="GO:0052724">
    <property type="term" value="F:inositol hexakisphosphate 3-kinase activity"/>
    <property type="evidence" value="ECO:0000314"/>
    <property type="project" value="SGD"/>
</dbReference>
<dbReference type="GO" id="GO:0000830">
    <property type="term" value="F:inositol hexakisphosphate 4-kinase activity"/>
    <property type="evidence" value="ECO:0000314"/>
    <property type="project" value="SGD"/>
</dbReference>
<dbReference type="GO" id="GO:0000831">
    <property type="term" value="F:inositol hexakisphosphate 6-kinase activity"/>
    <property type="evidence" value="ECO:0000314"/>
    <property type="project" value="SGD"/>
</dbReference>
<dbReference type="GO" id="GO:0000828">
    <property type="term" value="F:inositol hexakisphosphate kinase activity"/>
    <property type="evidence" value="ECO:0000318"/>
    <property type="project" value="GO_Central"/>
</dbReference>
<dbReference type="GO" id="GO:0052843">
    <property type="term" value="F:inositol-1-diphosphate-2,3,4,5,6-pentakisphosphate diphosphatase activity"/>
    <property type="evidence" value="ECO:0000314"/>
    <property type="project" value="SGD"/>
</dbReference>
<dbReference type="GO" id="GO:0052845">
    <property type="term" value="F:inositol-5-diphosphate-1,2,3,4,6-pentakisphosphate diphosphatase activity"/>
    <property type="evidence" value="ECO:0000314"/>
    <property type="project" value="SGD"/>
</dbReference>
<dbReference type="GO" id="GO:0006020">
    <property type="term" value="P:inositol metabolic process"/>
    <property type="evidence" value="ECO:0000318"/>
    <property type="project" value="GO_Central"/>
</dbReference>
<dbReference type="GO" id="GO:0032958">
    <property type="term" value="P:inositol phosphate biosynthetic process"/>
    <property type="evidence" value="ECO:0000314"/>
    <property type="project" value="SGD"/>
</dbReference>
<dbReference type="GO" id="GO:0051516">
    <property type="term" value="P:regulation of bipolar cell growth"/>
    <property type="evidence" value="ECO:0000250"/>
    <property type="project" value="UniProtKB"/>
</dbReference>
<dbReference type="GO" id="GO:0070507">
    <property type="term" value="P:regulation of microtubule cytoskeleton organization"/>
    <property type="evidence" value="ECO:0000250"/>
    <property type="project" value="UniProtKB"/>
</dbReference>
<dbReference type="CDD" id="cd07061">
    <property type="entry name" value="HP_HAP_like"/>
    <property type="match status" value="1"/>
</dbReference>
<dbReference type="FunFam" id="3.30.470.20:FF:000036">
    <property type="entry name" value="Inositol hexakisphosphate and diphosphoinositol-pentakisphosphate kinase"/>
    <property type="match status" value="1"/>
</dbReference>
<dbReference type="FunFam" id="3.40.50.11950:FF:000002">
    <property type="entry name" value="Inositol hexakisphosphate and diphosphoinositol-pentakisphosphate kinase"/>
    <property type="match status" value="1"/>
</dbReference>
<dbReference type="Gene3D" id="3.40.50.11950">
    <property type="match status" value="1"/>
</dbReference>
<dbReference type="Gene3D" id="3.30.470.20">
    <property type="entry name" value="ATP-grasp fold, B domain"/>
    <property type="match status" value="1"/>
</dbReference>
<dbReference type="Gene3D" id="3.40.50.1240">
    <property type="entry name" value="Phosphoglycerate mutase-like"/>
    <property type="match status" value="1"/>
</dbReference>
<dbReference type="InterPro" id="IPR013651">
    <property type="entry name" value="ATP-grasp_RimK-type"/>
</dbReference>
<dbReference type="InterPro" id="IPR000560">
    <property type="entry name" value="His_Pase_clade-2"/>
</dbReference>
<dbReference type="InterPro" id="IPR037446">
    <property type="entry name" value="His_Pase_VIP1"/>
</dbReference>
<dbReference type="InterPro" id="IPR029033">
    <property type="entry name" value="His_PPase_superfam"/>
</dbReference>
<dbReference type="InterPro" id="IPR040557">
    <property type="entry name" value="VIP1_N"/>
</dbReference>
<dbReference type="PANTHER" id="PTHR12750">
    <property type="entry name" value="DIPHOSPHOINOSITOL PENTAKISPHOSPHATE KINASE"/>
    <property type="match status" value="1"/>
</dbReference>
<dbReference type="PANTHER" id="PTHR12750:SF9">
    <property type="entry name" value="INOSITOL HEXAKISPHOSPHATE AND DIPHOSPHOINOSITOL-PENTAKISPHOSPHATE KINASE"/>
    <property type="match status" value="1"/>
</dbReference>
<dbReference type="Pfam" id="PF00328">
    <property type="entry name" value="His_Phos_2"/>
    <property type="match status" value="1"/>
</dbReference>
<dbReference type="Pfam" id="PF18086">
    <property type="entry name" value="PPIP5K2_N"/>
    <property type="match status" value="1"/>
</dbReference>
<dbReference type="Pfam" id="PF08443">
    <property type="entry name" value="RimK"/>
    <property type="match status" value="1"/>
</dbReference>
<dbReference type="SUPFAM" id="SSF56059">
    <property type="entry name" value="Glutathione synthetase ATP-binding domain-like"/>
    <property type="match status" value="1"/>
</dbReference>
<dbReference type="SUPFAM" id="SSF53254">
    <property type="entry name" value="Phosphoglycerate mutase-like"/>
    <property type="match status" value="1"/>
</dbReference>